<comment type="function">
    <text evidence="1">Heme chaperone required for the biogenesis of c-type cytochromes. Transiently binds heme delivered by CcmC and transfers the heme to apo-cytochromes in a process facilitated by CcmF and CcmH.</text>
</comment>
<comment type="subcellular location">
    <subcellularLocation>
        <location evidence="1">Cell inner membrane</location>
        <topology evidence="1">Single-pass type II membrane protein</topology>
        <orientation evidence="1">Periplasmic side</orientation>
    </subcellularLocation>
</comment>
<comment type="similarity">
    <text evidence="1">Belongs to the CcmE/CycJ family.</text>
</comment>
<accession>Q0HNQ9</accession>
<feature type="chain" id="PRO_1000070859" description="Cytochrome c-type biogenesis protein CcmE">
    <location>
        <begin position="1"/>
        <end position="161"/>
    </location>
</feature>
<feature type="topological domain" description="Cytoplasmic" evidence="1">
    <location>
        <begin position="1"/>
        <end position="8"/>
    </location>
</feature>
<feature type="transmembrane region" description="Helical; Signal-anchor for type II membrane protein" evidence="1">
    <location>
        <begin position="9"/>
        <end position="29"/>
    </location>
</feature>
<feature type="topological domain" description="Periplasmic" evidence="1">
    <location>
        <begin position="30"/>
        <end position="161"/>
    </location>
</feature>
<feature type="region of interest" description="Disordered" evidence="2">
    <location>
        <begin position="138"/>
        <end position="161"/>
    </location>
</feature>
<feature type="binding site" description="covalent" evidence="1">
    <location>
        <position position="131"/>
    </location>
    <ligand>
        <name>heme</name>
        <dbReference type="ChEBI" id="CHEBI:30413"/>
    </ligand>
</feature>
<feature type="binding site" description="axial binding residue" evidence="1">
    <location>
        <position position="135"/>
    </location>
    <ligand>
        <name>heme</name>
        <dbReference type="ChEBI" id="CHEBI:30413"/>
    </ligand>
    <ligandPart>
        <name>Fe</name>
        <dbReference type="ChEBI" id="CHEBI:18248"/>
    </ligandPart>
</feature>
<protein>
    <recommendedName>
        <fullName evidence="1">Cytochrome c-type biogenesis protein CcmE</fullName>
    </recommendedName>
    <alternativeName>
        <fullName evidence="1">Cytochrome c maturation protein E</fullName>
    </alternativeName>
    <alternativeName>
        <fullName evidence="1">Heme chaperone CcmE</fullName>
    </alternativeName>
</protein>
<reference key="1">
    <citation type="submission" date="2006-08" db="EMBL/GenBank/DDBJ databases">
        <title>Complete sequence of Shewanella sp. MR-4.</title>
        <authorList>
            <consortium name="US DOE Joint Genome Institute"/>
            <person name="Copeland A."/>
            <person name="Lucas S."/>
            <person name="Lapidus A."/>
            <person name="Barry K."/>
            <person name="Detter J.C."/>
            <person name="Glavina del Rio T."/>
            <person name="Hammon N."/>
            <person name="Israni S."/>
            <person name="Dalin E."/>
            <person name="Tice H."/>
            <person name="Pitluck S."/>
            <person name="Kiss H."/>
            <person name="Brettin T."/>
            <person name="Bruce D."/>
            <person name="Han C."/>
            <person name="Tapia R."/>
            <person name="Gilna P."/>
            <person name="Schmutz J."/>
            <person name="Larimer F."/>
            <person name="Land M."/>
            <person name="Hauser L."/>
            <person name="Kyrpides N."/>
            <person name="Mikhailova N."/>
            <person name="Nealson K."/>
            <person name="Konstantinidis K."/>
            <person name="Klappenbach J."/>
            <person name="Tiedje J."/>
            <person name="Richardson P."/>
        </authorList>
    </citation>
    <scope>NUCLEOTIDE SEQUENCE [LARGE SCALE GENOMIC DNA]</scope>
    <source>
        <strain>MR-4</strain>
    </source>
</reference>
<dbReference type="EMBL" id="CP000446">
    <property type="protein sequence ID" value="ABI37308.1"/>
    <property type="molecule type" value="Genomic_DNA"/>
</dbReference>
<dbReference type="RefSeq" id="WP_011621035.1">
    <property type="nucleotide sequence ID" value="NC_008321.1"/>
</dbReference>
<dbReference type="BMRB" id="Q0HNQ9"/>
<dbReference type="SMR" id="Q0HNQ9"/>
<dbReference type="KEGG" id="she:Shewmr4_0227"/>
<dbReference type="HOGENOM" id="CLU_079503_1_0_6"/>
<dbReference type="GO" id="GO:0005886">
    <property type="term" value="C:plasma membrane"/>
    <property type="evidence" value="ECO:0007669"/>
    <property type="project" value="UniProtKB-SubCell"/>
</dbReference>
<dbReference type="GO" id="GO:0020037">
    <property type="term" value="F:heme binding"/>
    <property type="evidence" value="ECO:0007669"/>
    <property type="project" value="InterPro"/>
</dbReference>
<dbReference type="GO" id="GO:0046872">
    <property type="term" value="F:metal ion binding"/>
    <property type="evidence" value="ECO:0007669"/>
    <property type="project" value="UniProtKB-KW"/>
</dbReference>
<dbReference type="GO" id="GO:0017004">
    <property type="term" value="P:cytochrome complex assembly"/>
    <property type="evidence" value="ECO:0007669"/>
    <property type="project" value="UniProtKB-KW"/>
</dbReference>
<dbReference type="FunFam" id="2.40.50.140:FF:000104">
    <property type="entry name" value="Cytochrome c-type biogenesis protein CcmE"/>
    <property type="match status" value="1"/>
</dbReference>
<dbReference type="Gene3D" id="2.40.50.140">
    <property type="entry name" value="Nucleic acid-binding proteins"/>
    <property type="match status" value="1"/>
</dbReference>
<dbReference type="HAMAP" id="MF_01959">
    <property type="entry name" value="CcmE"/>
    <property type="match status" value="1"/>
</dbReference>
<dbReference type="InterPro" id="IPR004329">
    <property type="entry name" value="CcmE"/>
</dbReference>
<dbReference type="InterPro" id="IPR036127">
    <property type="entry name" value="CcmE-like_sf"/>
</dbReference>
<dbReference type="InterPro" id="IPR012340">
    <property type="entry name" value="NA-bd_OB-fold"/>
</dbReference>
<dbReference type="NCBIfam" id="NF009638">
    <property type="entry name" value="PRK13165.1"/>
    <property type="match status" value="1"/>
</dbReference>
<dbReference type="NCBIfam" id="NF009729">
    <property type="entry name" value="PRK13254.1-3"/>
    <property type="match status" value="1"/>
</dbReference>
<dbReference type="PANTHER" id="PTHR34128">
    <property type="entry name" value="CYTOCHROME C-TYPE BIOGENESIS PROTEIN CCME HOMOLOG, MITOCHONDRIAL"/>
    <property type="match status" value="1"/>
</dbReference>
<dbReference type="PANTHER" id="PTHR34128:SF2">
    <property type="entry name" value="CYTOCHROME C-TYPE BIOGENESIS PROTEIN CCME HOMOLOG, MITOCHONDRIAL"/>
    <property type="match status" value="1"/>
</dbReference>
<dbReference type="Pfam" id="PF03100">
    <property type="entry name" value="CcmE"/>
    <property type="match status" value="1"/>
</dbReference>
<dbReference type="SUPFAM" id="SSF82093">
    <property type="entry name" value="Heme chaperone CcmE"/>
    <property type="match status" value="1"/>
</dbReference>
<keyword id="KW-0997">Cell inner membrane</keyword>
<keyword id="KW-1003">Cell membrane</keyword>
<keyword id="KW-0201">Cytochrome c-type biogenesis</keyword>
<keyword id="KW-0349">Heme</keyword>
<keyword id="KW-0408">Iron</keyword>
<keyword id="KW-0472">Membrane</keyword>
<keyword id="KW-0479">Metal-binding</keyword>
<keyword id="KW-0735">Signal-anchor</keyword>
<keyword id="KW-0812">Transmembrane</keyword>
<keyword id="KW-1133">Transmembrane helix</keyword>
<sequence>MNPRRKKRLTLAIALIGGVAAIASLLLYALNSNLNLFYTPSEIVNGKADTGVKPEAGQRIRVGGMVTVGSMVRDPNSLHVQFAVHDSLGGEIMVTYDDLLPDLFREGQGIVAQGVLGEDGKLAATEVLAKHDENYMPPEVAEAMGQKHEKLDYSQQKSAAQ</sequence>
<name>CCME_SHESM</name>
<organism>
    <name type="scientific">Shewanella sp. (strain MR-4)</name>
    <dbReference type="NCBI Taxonomy" id="60480"/>
    <lineage>
        <taxon>Bacteria</taxon>
        <taxon>Pseudomonadati</taxon>
        <taxon>Pseudomonadota</taxon>
        <taxon>Gammaproteobacteria</taxon>
        <taxon>Alteromonadales</taxon>
        <taxon>Shewanellaceae</taxon>
        <taxon>Shewanella</taxon>
    </lineage>
</organism>
<evidence type="ECO:0000255" key="1">
    <source>
        <dbReference type="HAMAP-Rule" id="MF_01959"/>
    </source>
</evidence>
<evidence type="ECO:0000256" key="2">
    <source>
        <dbReference type="SAM" id="MobiDB-lite"/>
    </source>
</evidence>
<proteinExistence type="inferred from homology"/>
<gene>
    <name evidence="1" type="primary">ccmE</name>
    <name evidence="1" type="synonym">cycJ</name>
    <name type="ordered locus">Shewmr4_0227</name>
</gene>